<feature type="chain" id="PRO_0000402961" description="Putative carbamate hydrolase RutD">
    <location>
        <begin position="1"/>
        <end position="275"/>
    </location>
</feature>
<protein>
    <recommendedName>
        <fullName evidence="1">Putative carbamate hydrolase RutD</fullName>
        <ecNumber evidence="1">3.5.1.-</ecNumber>
    </recommendedName>
    <alternativeName>
        <fullName evidence="1">Aminohydrolase</fullName>
    </alternativeName>
</protein>
<proteinExistence type="inferred from homology"/>
<organism>
    <name type="scientific">Escherichia coli O6:H1 (strain CFT073 / ATCC 700928 / UPEC)</name>
    <dbReference type="NCBI Taxonomy" id="199310"/>
    <lineage>
        <taxon>Bacteria</taxon>
        <taxon>Pseudomonadati</taxon>
        <taxon>Pseudomonadota</taxon>
        <taxon>Gammaproteobacteria</taxon>
        <taxon>Enterobacterales</taxon>
        <taxon>Enterobacteriaceae</taxon>
        <taxon>Escherichia</taxon>
    </lineage>
</organism>
<dbReference type="EC" id="3.5.1.-" evidence="1"/>
<dbReference type="EMBL" id="AE014075">
    <property type="protein sequence ID" value="AAN79614.1"/>
    <property type="molecule type" value="Genomic_DNA"/>
</dbReference>
<dbReference type="SMR" id="Q8FJ43"/>
<dbReference type="STRING" id="199310.c1146"/>
<dbReference type="ESTHER" id="ecoli-rutD">
    <property type="family name" value="RutD"/>
</dbReference>
<dbReference type="KEGG" id="ecc:c1146"/>
<dbReference type="eggNOG" id="COG2021">
    <property type="taxonomic scope" value="Bacteria"/>
</dbReference>
<dbReference type="HOGENOM" id="CLU_020336_50_1_6"/>
<dbReference type="BioCyc" id="ECOL199310:C1146-MONOMER"/>
<dbReference type="Proteomes" id="UP000001410">
    <property type="component" value="Chromosome"/>
</dbReference>
<dbReference type="GO" id="GO:0016811">
    <property type="term" value="F:hydrolase activity, acting on carbon-nitrogen (but not peptide) bonds, in linear amides"/>
    <property type="evidence" value="ECO:0007669"/>
    <property type="project" value="InterPro"/>
</dbReference>
<dbReference type="GO" id="GO:0019740">
    <property type="term" value="P:nitrogen utilization"/>
    <property type="evidence" value="ECO:0007669"/>
    <property type="project" value="UniProtKB-UniRule"/>
</dbReference>
<dbReference type="GO" id="GO:0006212">
    <property type="term" value="P:uracil catabolic process"/>
    <property type="evidence" value="ECO:0007669"/>
    <property type="project" value="UniProtKB-UniRule"/>
</dbReference>
<dbReference type="FunFam" id="3.40.50.1820:FF:000052">
    <property type="entry name" value="Putative aminoacrylate hydrolase RutD"/>
    <property type="match status" value="1"/>
</dbReference>
<dbReference type="Gene3D" id="3.40.50.1820">
    <property type="entry name" value="alpha/beta hydrolase"/>
    <property type="match status" value="1"/>
</dbReference>
<dbReference type="HAMAP" id="MF_00832">
    <property type="entry name" value="RutD"/>
    <property type="match status" value="1"/>
</dbReference>
<dbReference type="InterPro" id="IPR000073">
    <property type="entry name" value="AB_hydrolase_1"/>
</dbReference>
<dbReference type="InterPro" id="IPR029058">
    <property type="entry name" value="AB_hydrolase_fold"/>
</dbReference>
<dbReference type="InterPro" id="IPR050266">
    <property type="entry name" value="AB_hydrolase_sf"/>
</dbReference>
<dbReference type="InterPro" id="IPR019913">
    <property type="entry name" value="Pyrimidine_utilisation_RutD"/>
</dbReference>
<dbReference type="NCBIfam" id="TIGR03611">
    <property type="entry name" value="RutD"/>
    <property type="match status" value="1"/>
</dbReference>
<dbReference type="PANTHER" id="PTHR43798">
    <property type="entry name" value="MONOACYLGLYCEROL LIPASE"/>
    <property type="match status" value="1"/>
</dbReference>
<dbReference type="Pfam" id="PF00561">
    <property type="entry name" value="Abhydrolase_1"/>
    <property type="match status" value="1"/>
</dbReference>
<dbReference type="SUPFAM" id="SSF53474">
    <property type="entry name" value="alpha/beta-Hydrolases"/>
    <property type="match status" value="1"/>
</dbReference>
<evidence type="ECO:0000255" key="1">
    <source>
        <dbReference type="HAMAP-Rule" id="MF_00832"/>
    </source>
</evidence>
<gene>
    <name evidence="1" type="primary">rutD</name>
    <name type="ordered locus">c1146</name>
</gene>
<keyword id="KW-0378">Hydrolase</keyword>
<keyword id="KW-1185">Reference proteome</keyword>
<accession>Q8FJ43</accession>
<sequence>MRISPSETAMKLSLSPPPYADAPVVVLISGLGGSGSYWLPQLAVLDQEYQVVCYDQRGTGNNPDTLAEDYSIAQMAAELHQALVAAGIERYAVVGHALGALVGMQLALDYPASVTVLVSVNGWLRINAHTRRCFQVREQLLHSGGAQAWVEAQPLFLYPADWMAARAPRLEAEGALALAHFQGKNNLLRRLNALKRADFSRHADRIRCPVQIICASDDLLVPSACSSELHAALPDSQKMVMRYGGHACNVTDPETFNALLLNGLASLLHHREAAL</sequence>
<reference key="1">
    <citation type="journal article" date="2002" name="Proc. Natl. Acad. Sci. U.S.A.">
        <title>Extensive mosaic structure revealed by the complete genome sequence of uropathogenic Escherichia coli.</title>
        <authorList>
            <person name="Welch R.A."/>
            <person name="Burland V."/>
            <person name="Plunkett G. III"/>
            <person name="Redford P."/>
            <person name="Roesch P."/>
            <person name="Rasko D."/>
            <person name="Buckles E.L."/>
            <person name="Liou S.-R."/>
            <person name="Boutin A."/>
            <person name="Hackett J."/>
            <person name="Stroud D."/>
            <person name="Mayhew G.F."/>
            <person name="Rose D.J."/>
            <person name="Zhou S."/>
            <person name="Schwartz D.C."/>
            <person name="Perna N.T."/>
            <person name="Mobley H.L.T."/>
            <person name="Donnenberg M.S."/>
            <person name="Blattner F.R."/>
        </authorList>
    </citation>
    <scope>NUCLEOTIDE SEQUENCE [LARGE SCALE GENOMIC DNA]</scope>
    <source>
        <strain>CFT073 / ATCC 700928 / UPEC</strain>
    </source>
</reference>
<comment type="function">
    <text evidence="1">Involved in pyrimidine catabolism. May facilitate the hydrolysis of carbamate, a reaction that can also occur spontaneously.</text>
</comment>
<comment type="catalytic activity">
    <reaction evidence="1">
        <text>carbamate + 2 H(+) = NH4(+) + CO2</text>
        <dbReference type="Rhea" id="RHEA:15649"/>
        <dbReference type="ChEBI" id="CHEBI:13941"/>
        <dbReference type="ChEBI" id="CHEBI:15378"/>
        <dbReference type="ChEBI" id="CHEBI:16526"/>
        <dbReference type="ChEBI" id="CHEBI:28938"/>
    </reaction>
</comment>
<comment type="similarity">
    <text evidence="1">Belongs to the AB hydrolase superfamily. Hydrolase RutD family.</text>
</comment>
<name>RUTD_ECOL6</name>